<proteinExistence type="inferred from homology"/>
<accession>B0BXN8</accession>
<sequence>MHNTDVVIIGAGPVGLFAVFQAGMLGMKCHVIDAQEVIGGQCITLYPEKPIYDIPAYPKIVAEELIKQLALQAAPFNPIYHLNQQAIELNKQDDFFEIKTSKNTLIKSKVIIIAAGAGSFGPNKPPLANIEDFESKSVFYFINDKSKFAGKNIVIAGGGDSAVDWAISLSDIANKIYLVHRRDKFTAAPESVRQLRHIAETNKIELITGYQLNALDGNNSELQSVIVKDLQNNTRKLDANILLPFFGLKQDLGSLANWGLNVKLHHIEVDSSYYQTNIEGIYAIGDIAHYVGKLKLILTGFAEAASSLHHAYSRVFDGKALHFEYSTTKNTGKRSKSVTK</sequence>
<feature type="chain" id="PRO_0000364928" description="Ferredoxin--NADP reductase">
    <location>
        <begin position="1"/>
        <end position="340"/>
    </location>
</feature>
<feature type="binding site" evidence="1">
    <location>
        <position position="33"/>
    </location>
    <ligand>
        <name>FAD</name>
        <dbReference type="ChEBI" id="CHEBI:57692"/>
    </ligand>
</feature>
<feature type="binding site" evidence="1">
    <location>
        <position position="41"/>
    </location>
    <ligand>
        <name>FAD</name>
        <dbReference type="ChEBI" id="CHEBI:57692"/>
    </ligand>
</feature>
<feature type="binding site" evidence="1">
    <location>
        <position position="46"/>
    </location>
    <ligand>
        <name>FAD</name>
        <dbReference type="ChEBI" id="CHEBI:57692"/>
    </ligand>
</feature>
<feature type="binding site" evidence="1">
    <location>
        <position position="86"/>
    </location>
    <ligand>
        <name>FAD</name>
        <dbReference type="ChEBI" id="CHEBI:57692"/>
    </ligand>
</feature>
<feature type="binding site" evidence="1">
    <location>
        <position position="120"/>
    </location>
    <ligand>
        <name>FAD</name>
        <dbReference type="ChEBI" id="CHEBI:57692"/>
    </ligand>
</feature>
<feature type="binding site" evidence="1">
    <location>
        <position position="286"/>
    </location>
    <ligand>
        <name>FAD</name>
        <dbReference type="ChEBI" id="CHEBI:57692"/>
    </ligand>
</feature>
<feature type="binding site" evidence="1">
    <location>
        <position position="327"/>
    </location>
    <ligand>
        <name>FAD</name>
        <dbReference type="ChEBI" id="CHEBI:57692"/>
    </ligand>
</feature>
<name>FENR_RICRO</name>
<protein>
    <recommendedName>
        <fullName evidence="1">Ferredoxin--NADP reductase</fullName>
        <shortName evidence="1">FNR</shortName>
        <shortName evidence="1">Fd-NADP(+) reductase</shortName>
        <ecNumber evidence="1">1.18.1.2</ecNumber>
    </recommendedName>
</protein>
<dbReference type="EC" id="1.18.1.2" evidence="1"/>
<dbReference type="EMBL" id="CP000766">
    <property type="protein sequence ID" value="ABY72614.1"/>
    <property type="molecule type" value="Genomic_DNA"/>
</dbReference>
<dbReference type="RefSeq" id="WP_012262392.1">
    <property type="nucleotide sequence ID" value="NC_010263.3"/>
</dbReference>
<dbReference type="SMR" id="B0BXN8"/>
<dbReference type="KEGG" id="rrj:RrIowa_0762"/>
<dbReference type="eggNOG" id="COG0492">
    <property type="taxonomic scope" value="Bacteria"/>
</dbReference>
<dbReference type="HOGENOM" id="CLU_031864_5_5_5"/>
<dbReference type="Proteomes" id="UP000000796">
    <property type="component" value="Chromosome"/>
</dbReference>
<dbReference type="GO" id="GO:0004324">
    <property type="term" value="F:ferredoxin-NADP+ reductase activity"/>
    <property type="evidence" value="ECO:0007669"/>
    <property type="project" value="UniProtKB-UniRule"/>
</dbReference>
<dbReference type="GO" id="GO:0050660">
    <property type="term" value="F:flavin adenine dinucleotide binding"/>
    <property type="evidence" value="ECO:0007669"/>
    <property type="project" value="UniProtKB-UniRule"/>
</dbReference>
<dbReference type="GO" id="GO:0050661">
    <property type="term" value="F:NADP binding"/>
    <property type="evidence" value="ECO:0007669"/>
    <property type="project" value="UniProtKB-UniRule"/>
</dbReference>
<dbReference type="Gene3D" id="3.50.50.60">
    <property type="entry name" value="FAD/NAD(P)-binding domain"/>
    <property type="match status" value="2"/>
</dbReference>
<dbReference type="HAMAP" id="MF_01685">
    <property type="entry name" value="FENR2"/>
    <property type="match status" value="1"/>
</dbReference>
<dbReference type="InterPro" id="IPR036188">
    <property type="entry name" value="FAD/NAD-bd_sf"/>
</dbReference>
<dbReference type="InterPro" id="IPR023753">
    <property type="entry name" value="FAD/NAD-binding_dom"/>
</dbReference>
<dbReference type="InterPro" id="IPR022890">
    <property type="entry name" value="Fd--NADP_Rdtase_type_2"/>
</dbReference>
<dbReference type="InterPro" id="IPR050097">
    <property type="entry name" value="Ferredoxin-NADP_redctase_2"/>
</dbReference>
<dbReference type="PANTHER" id="PTHR48105">
    <property type="entry name" value="THIOREDOXIN REDUCTASE 1-RELATED-RELATED"/>
    <property type="match status" value="1"/>
</dbReference>
<dbReference type="Pfam" id="PF07992">
    <property type="entry name" value="Pyr_redox_2"/>
    <property type="match status" value="1"/>
</dbReference>
<dbReference type="PRINTS" id="PR00368">
    <property type="entry name" value="FADPNR"/>
</dbReference>
<dbReference type="PRINTS" id="PR00469">
    <property type="entry name" value="PNDRDTASEII"/>
</dbReference>
<dbReference type="SUPFAM" id="SSF51905">
    <property type="entry name" value="FAD/NAD(P)-binding domain"/>
    <property type="match status" value="1"/>
</dbReference>
<organism>
    <name type="scientific">Rickettsia rickettsii (strain Iowa)</name>
    <dbReference type="NCBI Taxonomy" id="452659"/>
    <lineage>
        <taxon>Bacteria</taxon>
        <taxon>Pseudomonadati</taxon>
        <taxon>Pseudomonadota</taxon>
        <taxon>Alphaproteobacteria</taxon>
        <taxon>Rickettsiales</taxon>
        <taxon>Rickettsiaceae</taxon>
        <taxon>Rickettsieae</taxon>
        <taxon>Rickettsia</taxon>
        <taxon>spotted fever group</taxon>
    </lineage>
</organism>
<keyword id="KW-0274">FAD</keyword>
<keyword id="KW-0285">Flavoprotein</keyword>
<keyword id="KW-0521">NADP</keyword>
<keyword id="KW-0560">Oxidoreductase</keyword>
<comment type="catalytic activity">
    <reaction evidence="1">
        <text>2 reduced [2Fe-2S]-[ferredoxin] + NADP(+) + H(+) = 2 oxidized [2Fe-2S]-[ferredoxin] + NADPH</text>
        <dbReference type="Rhea" id="RHEA:20125"/>
        <dbReference type="Rhea" id="RHEA-COMP:10000"/>
        <dbReference type="Rhea" id="RHEA-COMP:10001"/>
        <dbReference type="ChEBI" id="CHEBI:15378"/>
        <dbReference type="ChEBI" id="CHEBI:33737"/>
        <dbReference type="ChEBI" id="CHEBI:33738"/>
        <dbReference type="ChEBI" id="CHEBI:57783"/>
        <dbReference type="ChEBI" id="CHEBI:58349"/>
        <dbReference type="EC" id="1.18.1.2"/>
    </reaction>
</comment>
<comment type="cofactor">
    <cofactor evidence="1">
        <name>FAD</name>
        <dbReference type="ChEBI" id="CHEBI:57692"/>
    </cofactor>
    <text evidence="1">Binds 1 FAD per subunit.</text>
</comment>
<comment type="subunit">
    <text evidence="1">Homodimer.</text>
</comment>
<comment type="similarity">
    <text evidence="1">Belongs to the ferredoxin--NADP reductase type 2 family.</text>
</comment>
<evidence type="ECO:0000255" key="1">
    <source>
        <dbReference type="HAMAP-Rule" id="MF_01685"/>
    </source>
</evidence>
<gene>
    <name type="ordered locus">RrIowa_0762</name>
</gene>
<reference key="1">
    <citation type="journal article" date="2008" name="Infect. Immun.">
        <title>Genomic comparison of virulent Rickettsia rickettsii Sheila Smith and avirulent Rickettsia rickettsii Iowa.</title>
        <authorList>
            <person name="Ellison D.W."/>
            <person name="Clark T.R."/>
            <person name="Sturdevant D.E."/>
            <person name="Virtaneva K."/>
            <person name="Porcella S.F."/>
            <person name="Hackstadt T."/>
        </authorList>
    </citation>
    <scope>NUCLEOTIDE SEQUENCE [LARGE SCALE GENOMIC DNA]</scope>
    <source>
        <strain>Iowa</strain>
    </source>
</reference>